<protein>
    <recommendedName>
        <fullName>Protein cornichon homolog 3</fullName>
        <shortName>CNIH-3</shortName>
    </recommendedName>
    <alternativeName>
        <fullName>Cornichon family AMPA receptor auxiliary protein 3</fullName>
    </alternativeName>
</protein>
<name>CNIH3_RAT</name>
<gene>
    <name type="primary">Cnih3</name>
</gene>
<reference key="1">
    <citation type="journal article" date="2009" name="Science">
        <title>Functional proteomics identify cornichon proteins as auxiliary subunits of AMPA receptors.</title>
        <authorList>
            <person name="Schwenk J."/>
            <person name="Harmel N."/>
            <person name="Zolles G."/>
            <person name="Bildl W."/>
            <person name="Kulik A."/>
            <person name="Heimrich B."/>
            <person name="Chisaka O."/>
            <person name="Jonas P."/>
            <person name="Schulte U."/>
            <person name="Fakler B."/>
            <person name="Kloecker N."/>
        </authorList>
    </citation>
    <scope>NUCLEOTIDE SEQUENCE [MRNA]</scope>
    <scope>FUNCTION</scope>
    <scope>SUBCELLULAR LOCATION</scope>
    <scope>SUBUNIT</scope>
    <scope>IDENTIFICATION BY MASS SPECTROMETRY</scope>
    <scope>TISSUE SPECIFICITY</scope>
    <source>
        <strain>Wistar</strain>
        <tissue>Brain</tissue>
    </source>
</reference>
<sequence>MAFTFAAFCYMLSLVLCAALIFFAIWHIIAFDELRTDFKSPIDQCNPVHARERLRNIERICFLLRKLVLPEYSIHSLFCVMFLCAQEWLTLGLNVPLLFYHFWRYFHCPADSSELAYDPPVVMNADTLSYCQKEAWCKLAFYLLSFFYYLYCMIYTLVSS</sequence>
<keyword id="KW-1003">Cell membrane</keyword>
<keyword id="KW-0472">Membrane</keyword>
<keyword id="KW-0628">Postsynaptic cell membrane</keyword>
<keyword id="KW-1185">Reference proteome</keyword>
<keyword id="KW-0770">Synapse</keyword>
<keyword id="KW-0812">Transmembrane</keyword>
<keyword id="KW-1133">Transmembrane helix</keyword>
<feature type="chain" id="PRO_0000408978" description="Protein cornichon homolog 3">
    <location>
        <begin position="1"/>
        <end position="160"/>
    </location>
</feature>
<feature type="topological domain" description="Cytoplasmic" evidence="1">
    <location>
        <begin position="1"/>
        <end position="10"/>
    </location>
</feature>
<feature type="transmembrane region" description="Helical" evidence="1">
    <location>
        <begin position="11"/>
        <end position="31"/>
    </location>
</feature>
<feature type="topological domain" description="Lumenal" evidence="1">
    <location>
        <begin position="32"/>
        <end position="72"/>
    </location>
</feature>
<feature type="transmembrane region" description="Helical" evidence="1">
    <location>
        <begin position="73"/>
        <end position="93"/>
    </location>
</feature>
<feature type="topological domain" description="Cytoplasmic" evidence="1">
    <location>
        <begin position="94"/>
        <end position="138"/>
    </location>
</feature>
<feature type="transmembrane region" description="Helical" evidence="1">
    <location>
        <begin position="139"/>
        <end position="159"/>
    </location>
</feature>
<feature type="topological domain" description="Lumenal" evidence="1">
    <location>
        <position position="160"/>
    </location>
</feature>
<organism>
    <name type="scientific">Rattus norvegicus</name>
    <name type="common">Rat</name>
    <dbReference type="NCBI Taxonomy" id="10116"/>
    <lineage>
        <taxon>Eukaryota</taxon>
        <taxon>Metazoa</taxon>
        <taxon>Chordata</taxon>
        <taxon>Craniata</taxon>
        <taxon>Vertebrata</taxon>
        <taxon>Euteleostomi</taxon>
        <taxon>Mammalia</taxon>
        <taxon>Eutheria</taxon>
        <taxon>Euarchontoglires</taxon>
        <taxon>Glires</taxon>
        <taxon>Rodentia</taxon>
        <taxon>Myomorpha</taxon>
        <taxon>Muroidea</taxon>
        <taxon>Muridae</taxon>
        <taxon>Murinae</taxon>
        <taxon>Rattus</taxon>
    </lineage>
</organism>
<comment type="function">
    <text evidence="2">Regulates the trafficking and gating properties of AMPA-selective glutamate receptors (AMPARs). Promotes their targeting to the cell membrane and synapses and modulates their gating properties by regulating their rates of activation, deactivation and desensitization.</text>
</comment>
<comment type="subunit">
    <text evidence="2">Acts as an auxiliary subunit for AMPA-selective glutamate receptors (AMPARs). Found in a complex with GRIA1, GRIA2, GRIA3, GRIA4, CNIH2, CACNG2, CACNG3, CACNG4, CACNG5, CACNG7 and CACNG8.</text>
</comment>
<comment type="subcellular location">
    <subcellularLocation>
        <location evidence="2">Postsynaptic cell membrane</location>
        <topology evidence="2">Multi-pass membrane protein</topology>
    </subcellularLocation>
    <text>Also localizes to the cell membrane of extrasynaptic sites (dendritic shafts, spines of pyramidal cells).</text>
</comment>
<comment type="tissue specificity">
    <text evidence="2">Brain. Expressed in the neocortex, hippocampal formation, and cerebellum (at protein level).</text>
</comment>
<comment type="similarity">
    <text evidence="3">Belongs to the cornichon family.</text>
</comment>
<accession>D0Q0Y7</accession>
<dbReference type="EMBL" id="FJ403327">
    <property type="protein sequence ID" value="ACQ83464.1"/>
    <property type="molecule type" value="mRNA"/>
</dbReference>
<dbReference type="RefSeq" id="NP_001160050.1">
    <property type="nucleotide sequence ID" value="NM_001166578.2"/>
</dbReference>
<dbReference type="SMR" id="D0Q0Y7"/>
<dbReference type="CORUM" id="D0Q0Y7"/>
<dbReference type="FunCoup" id="D0Q0Y7">
    <property type="interactions" value="1407"/>
</dbReference>
<dbReference type="STRING" id="10116.ENSRNOP00000035332"/>
<dbReference type="PaxDb" id="10116-ENSRNOP00000035332"/>
<dbReference type="PeptideAtlas" id="D0Q0Y7"/>
<dbReference type="GeneID" id="690252"/>
<dbReference type="KEGG" id="rno:690252"/>
<dbReference type="UCSC" id="RGD:1582859">
    <property type="organism name" value="rat"/>
</dbReference>
<dbReference type="AGR" id="RGD:1582859"/>
<dbReference type="CTD" id="149111"/>
<dbReference type="RGD" id="1582859">
    <property type="gene designation" value="Cnih3"/>
</dbReference>
<dbReference type="VEuPathDB" id="HostDB:ENSRNOG00000022724"/>
<dbReference type="eggNOG" id="KOG2729">
    <property type="taxonomic scope" value="Eukaryota"/>
</dbReference>
<dbReference type="HOGENOM" id="CLU_112942_1_0_1"/>
<dbReference type="InParanoid" id="D0Q0Y7"/>
<dbReference type="OrthoDB" id="434393at2759"/>
<dbReference type="PhylomeDB" id="D0Q0Y7"/>
<dbReference type="Reactome" id="R-RNO-204005">
    <property type="pathway name" value="COPII-mediated vesicle transport"/>
</dbReference>
<dbReference type="Reactome" id="R-RNO-5694530">
    <property type="pathway name" value="Cargo concentration in the ER"/>
</dbReference>
<dbReference type="PRO" id="PR:D0Q0Y7"/>
<dbReference type="Proteomes" id="UP000002494">
    <property type="component" value="Chromosome 13"/>
</dbReference>
<dbReference type="Bgee" id="ENSRNOG00000022724">
    <property type="expression patterns" value="Expressed in frontal cortex and 4 other cell types or tissues"/>
</dbReference>
<dbReference type="GO" id="GO:0032281">
    <property type="term" value="C:AMPA glutamate receptor complex"/>
    <property type="evidence" value="ECO:0000314"/>
    <property type="project" value="UniProtKB"/>
</dbReference>
<dbReference type="GO" id="GO:0030425">
    <property type="term" value="C:dendrite"/>
    <property type="evidence" value="ECO:0000318"/>
    <property type="project" value="GO_Central"/>
</dbReference>
<dbReference type="GO" id="GO:0043198">
    <property type="term" value="C:dendritic shaft"/>
    <property type="evidence" value="ECO:0000314"/>
    <property type="project" value="UniProtKB"/>
</dbReference>
<dbReference type="GO" id="GO:0098978">
    <property type="term" value="C:glutamatergic synapse"/>
    <property type="evidence" value="ECO:0000266"/>
    <property type="project" value="RGD"/>
</dbReference>
<dbReference type="GO" id="GO:0045211">
    <property type="term" value="C:postsynaptic membrane"/>
    <property type="evidence" value="ECO:0000314"/>
    <property type="project" value="UniProtKB"/>
</dbReference>
<dbReference type="GO" id="GO:0045202">
    <property type="term" value="C:synapse"/>
    <property type="evidence" value="ECO:0000318"/>
    <property type="project" value="GO_Central"/>
</dbReference>
<dbReference type="GO" id="GO:0016247">
    <property type="term" value="F:channel regulator activity"/>
    <property type="evidence" value="ECO:0000314"/>
    <property type="project" value="MGI"/>
</dbReference>
<dbReference type="GO" id="GO:0005102">
    <property type="term" value="F:signaling receptor binding"/>
    <property type="evidence" value="ECO:0000318"/>
    <property type="project" value="GO_Central"/>
</dbReference>
<dbReference type="GO" id="GO:0099645">
    <property type="term" value="P:neurotransmitter receptor localization to postsynaptic specialization membrane"/>
    <property type="evidence" value="ECO:0000266"/>
    <property type="project" value="RGD"/>
</dbReference>
<dbReference type="GO" id="GO:2000311">
    <property type="term" value="P:regulation of AMPA receptor activity"/>
    <property type="evidence" value="ECO:0000314"/>
    <property type="project" value="UniProtKB"/>
</dbReference>
<dbReference type="GO" id="GO:0042391">
    <property type="term" value="P:regulation of membrane potential"/>
    <property type="evidence" value="ECO:0000314"/>
    <property type="project" value="MGI"/>
</dbReference>
<dbReference type="GO" id="GO:0035249">
    <property type="term" value="P:synaptic transmission, glutamatergic"/>
    <property type="evidence" value="ECO:0000314"/>
    <property type="project" value="MGI"/>
</dbReference>
<dbReference type="GO" id="GO:0016192">
    <property type="term" value="P:vesicle-mediated transport"/>
    <property type="evidence" value="ECO:0007669"/>
    <property type="project" value="InterPro"/>
</dbReference>
<dbReference type="InterPro" id="IPR003377">
    <property type="entry name" value="Cornichon"/>
</dbReference>
<dbReference type="InterPro" id="IPR033466">
    <property type="entry name" value="Cornichon_conserved"/>
</dbReference>
<dbReference type="PANTHER" id="PTHR12290">
    <property type="entry name" value="CORNICHON-RELATED"/>
    <property type="match status" value="1"/>
</dbReference>
<dbReference type="Pfam" id="PF03311">
    <property type="entry name" value="Cornichon"/>
    <property type="match status" value="2"/>
</dbReference>
<dbReference type="SMART" id="SM01398">
    <property type="entry name" value="Cornichon"/>
    <property type="match status" value="1"/>
</dbReference>
<dbReference type="PROSITE" id="PS01340">
    <property type="entry name" value="CORNICHON"/>
    <property type="match status" value="1"/>
</dbReference>
<proteinExistence type="evidence at protein level"/>
<evidence type="ECO:0000255" key="1"/>
<evidence type="ECO:0000269" key="2">
    <source>
    </source>
</evidence>
<evidence type="ECO:0000305" key="3"/>